<protein>
    <recommendedName>
        <fullName evidence="8">Transcription factor atf-2</fullName>
    </recommendedName>
    <alternativeName>
        <fullName evidence="10">cAMP-dependent transcription factor atf-2</fullName>
    </alternativeName>
</protein>
<dbReference type="EMBL" id="BX284602">
    <property type="protein sequence ID" value="CAA91284.1"/>
    <property type="molecule type" value="Genomic_DNA"/>
</dbReference>
<dbReference type="PIR" id="T23490">
    <property type="entry name" value="T23490"/>
</dbReference>
<dbReference type="RefSeq" id="NP_495861.1">
    <property type="nucleotide sequence ID" value="NM_063460.4"/>
</dbReference>
<dbReference type="SMR" id="Q21361"/>
<dbReference type="DIP" id="DIP-25386N"/>
<dbReference type="FunCoup" id="Q21361">
    <property type="interactions" value="2606"/>
</dbReference>
<dbReference type="IntAct" id="Q21361">
    <property type="interactions" value="21"/>
</dbReference>
<dbReference type="STRING" id="6239.K08F8.2.1"/>
<dbReference type="PaxDb" id="6239-K08F8.2"/>
<dbReference type="EnsemblMetazoa" id="K08F8.2.1">
    <property type="protein sequence ID" value="K08F8.2.1"/>
    <property type="gene ID" value="WBGene00000220"/>
</dbReference>
<dbReference type="GeneID" id="174399"/>
<dbReference type="KEGG" id="cel:CELE_K08F8.2"/>
<dbReference type="UCSC" id="K08F8.2">
    <property type="organism name" value="c. elegans"/>
</dbReference>
<dbReference type="AGR" id="WB:WBGene00000220"/>
<dbReference type="CTD" id="37978"/>
<dbReference type="WormBase" id="K08F8.2">
    <property type="protein sequence ID" value="CE03468"/>
    <property type="gene ID" value="WBGene00000220"/>
    <property type="gene designation" value="atf-2"/>
</dbReference>
<dbReference type="eggNOG" id="KOG3119">
    <property type="taxonomic scope" value="Eukaryota"/>
</dbReference>
<dbReference type="GeneTree" id="ENSGT00940000169039"/>
<dbReference type="HOGENOM" id="CLU_687426_0_0_1"/>
<dbReference type="InParanoid" id="Q21361"/>
<dbReference type="OMA" id="NDMIMEQ"/>
<dbReference type="OrthoDB" id="6022300at2759"/>
<dbReference type="PRO" id="PR:Q21361"/>
<dbReference type="Proteomes" id="UP000001940">
    <property type="component" value="Chromosome II"/>
</dbReference>
<dbReference type="Bgee" id="WBGene00000220">
    <property type="expression patterns" value="Expressed in pharyngeal muscle cell (C elegans) and 3 other cell types or tissues"/>
</dbReference>
<dbReference type="GO" id="GO:0005634">
    <property type="term" value="C:nucleus"/>
    <property type="evidence" value="ECO:0000318"/>
    <property type="project" value="GO_Central"/>
</dbReference>
<dbReference type="GO" id="GO:0003700">
    <property type="term" value="F:DNA-binding transcription factor activity"/>
    <property type="evidence" value="ECO:0007669"/>
    <property type="project" value="InterPro"/>
</dbReference>
<dbReference type="GO" id="GO:0046982">
    <property type="term" value="F:protein heterodimerization activity"/>
    <property type="evidence" value="ECO:0000353"/>
    <property type="project" value="UniProtKB"/>
</dbReference>
<dbReference type="GO" id="GO:0000977">
    <property type="term" value="F:RNA polymerase II transcription regulatory region sequence-specific DNA binding"/>
    <property type="evidence" value="ECO:0000314"/>
    <property type="project" value="UniProtKB"/>
</dbReference>
<dbReference type="GO" id="GO:0007623">
    <property type="term" value="P:circadian rhythm"/>
    <property type="evidence" value="ECO:0000318"/>
    <property type="project" value="GO_Central"/>
</dbReference>
<dbReference type="GO" id="GO:0000122">
    <property type="term" value="P:negative regulation of transcription by RNA polymerase II"/>
    <property type="evidence" value="ECO:0000315"/>
    <property type="project" value="WormBase"/>
</dbReference>
<dbReference type="GO" id="GO:0045944">
    <property type="term" value="P:positive regulation of transcription by RNA polymerase II"/>
    <property type="evidence" value="ECO:0000315"/>
    <property type="project" value="UniProtKB"/>
</dbReference>
<dbReference type="GO" id="GO:0006355">
    <property type="term" value="P:regulation of DNA-templated transcription"/>
    <property type="evidence" value="ECO:0000318"/>
    <property type="project" value="GO_Central"/>
</dbReference>
<dbReference type="CDD" id="cd14695">
    <property type="entry name" value="bZIP_HLF"/>
    <property type="match status" value="1"/>
</dbReference>
<dbReference type="CDD" id="cd14694">
    <property type="entry name" value="bZIP_NFIL3"/>
    <property type="match status" value="1"/>
</dbReference>
<dbReference type="FunFam" id="1.20.5.170:FF:000138">
    <property type="entry name" value="ATF (cAMP-dependent transcription factor) family"/>
    <property type="match status" value="1"/>
</dbReference>
<dbReference type="FunFam" id="1.20.5.170:FF:000127">
    <property type="entry name" value="Protein CBR-ATF-2"/>
    <property type="match status" value="1"/>
</dbReference>
<dbReference type="Gene3D" id="1.20.5.170">
    <property type="match status" value="2"/>
</dbReference>
<dbReference type="InterPro" id="IPR004827">
    <property type="entry name" value="bZIP"/>
</dbReference>
<dbReference type="InterPro" id="IPR046347">
    <property type="entry name" value="bZIP_sf"/>
</dbReference>
<dbReference type="InterPro" id="IPR047229">
    <property type="entry name" value="NFIL3-like"/>
</dbReference>
<dbReference type="InterPro" id="IPR047106">
    <property type="entry name" value="NFIL3-like_bZIP"/>
</dbReference>
<dbReference type="PANTHER" id="PTHR15284:SF0">
    <property type="entry name" value="GH23983P"/>
    <property type="match status" value="1"/>
</dbReference>
<dbReference type="PANTHER" id="PTHR15284">
    <property type="entry name" value="NUCLEAR FACTOR INTERLEUKIN-3-REGULATED PROTEIN"/>
    <property type="match status" value="1"/>
</dbReference>
<dbReference type="Pfam" id="PF07716">
    <property type="entry name" value="bZIP_2"/>
    <property type="match status" value="2"/>
</dbReference>
<dbReference type="SMART" id="SM00338">
    <property type="entry name" value="BRLZ"/>
    <property type="match status" value="2"/>
</dbReference>
<dbReference type="SUPFAM" id="SSF57959">
    <property type="entry name" value="Leucine zipper domain"/>
    <property type="match status" value="2"/>
</dbReference>
<dbReference type="PROSITE" id="PS50217">
    <property type="entry name" value="BZIP"/>
    <property type="match status" value="2"/>
</dbReference>
<dbReference type="PROSITE" id="PS00036">
    <property type="entry name" value="BZIP_BASIC"/>
    <property type="match status" value="1"/>
</dbReference>
<proteinExistence type="evidence at protein level"/>
<gene>
    <name evidence="10" type="primary">atf-2</name>
    <name evidence="10" type="ORF">K08F8.2</name>
</gene>
<organism evidence="9">
    <name type="scientific">Caenorhabditis elegans</name>
    <dbReference type="NCBI Taxonomy" id="6239"/>
    <lineage>
        <taxon>Eukaryota</taxon>
        <taxon>Metazoa</taxon>
        <taxon>Ecdysozoa</taxon>
        <taxon>Nematoda</taxon>
        <taxon>Chromadorea</taxon>
        <taxon>Rhabditida</taxon>
        <taxon>Rhabditina</taxon>
        <taxon>Rhabditomorpha</taxon>
        <taxon>Rhabditoidea</taxon>
        <taxon>Rhabditidae</taxon>
        <taxon>Peloderinae</taxon>
        <taxon>Caenorhabditis</taxon>
    </lineage>
</organism>
<reference evidence="9" key="1">
    <citation type="journal article" date="1998" name="Science">
        <title>Genome sequence of the nematode C. elegans: a platform for investigating biology.</title>
        <authorList>
            <consortium name="The C. elegans sequencing consortium"/>
        </authorList>
    </citation>
    <scope>NUCLEOTIDE SEQUENCE [LARGE SCALE GENOMIC DNA]</scope>
    <source>
        <strain evidence="9">Bristol N2</strain>
    </source>
</reference>
<reference evidence="8" key="2">
    <citation type="journal article" date="2001" name="Mol. Cell Biol. Res. Commun.">
        <title>Isolation and characterization of pmk-(1-3): three p38 homologs in Caenorhabditis elegans.</title>
        <authorList>
            <person name="Berman K."/>
            <person name="McKay J."/>
            <person name="Avery L."/>
            <person name="Cobb M."/>
        </authorList>
    </citation>
    <scope>PHOSPHORYLATION</scope>
</reference>
<reference evidence="8" key="3">
    <citation type="journal article" date="2006" name="Dev. Biol.">
        <title>The bZip proteins CES-2 and ATF-2 alter the timing of transcription for a cell-specific target gene in C. elegans.</title>
        <authorList>
            <person name="Wang X."/>
            <person name="Jia H."/>
            <person name="Chamberlin H.M."/>
        </authorList>
    </citation>
    <scope>FUNCTION</scope>
    <scope>INTERACTION WITH CES-2</scope>
    <scope>DEVELOPMENTAL STAGE</scope>
</reference>
<reference evidence="8" key="4">
    <citation type="journal article" date="2009" name="J. Neurochem.">
        <title>Discovery and characterization of a conserved pigment dispersing factor-like neuropeptide pathway in Caenorhabditis elegans.</title>
        <authorList>
            <person name="Janssen T."/>
            <person name="Husson S.J."/>
            <person name="Meelkop E."/>
            <person name="Temmerman L."/>
            <person name="Lindemans M."/>
            <person name="Verstraelen K."/>
            <person name="Rademakers S."/>
            <person name="Mertens I."/>
            <person name="Nitabach M."/>
            <person name="Jansen G."/>
            <person name="Schoofs L."/>
        </authorList>
    </citation>
    <scope>FUNCTION</scope>
</reference>
<reference evidence="8" key="5">
    <citation type="journal article" date="2011" name="J. Cell Sci.">
        <title>Shared developmental roles and transcriptional control of autophagy and apoptosis in Caenorhabditis elegans.</title>
        <authorList>
            <person name="Erdelyi P."/>
            <person name="Borsos E."/>
            <person name="Takacs-Vellai K."/>
            <person name="Kovacs T."/>
            <person name="Kovacs A.L."/>
            <person name="Sigmond T."/>
            <person name="Hargitai B."/>
            <person name="Pasztor L."/>
            <person name="Sengupta T."/>
            <person name="Dengg M."/>
            <person name="Pecsi I."/>
            <person name="Toth J."/>
            <person name="Nilsen H."/>
            <person name="Vertessy B.G."/>
            <person name="Vellai T."/>
        </authorList>
    </citation>
    <scope>FUNCTION</scope>
</reference>
<feature type="chain" id="PRO_0000454187" description="Transcription factor atf-2">
    <location>
        <begin position="1"/>
        <end position="401"/>
    </location>
</feature>
<feature type="domain" description="bZIP 1" evidence="2">
    <location>
        <begin position="54"/>
        <end position="100"/>
    </location>
</feature>
<feature type="domain" description="bZIP 2" evidence="2">
    <location>
        <begin position="329"/>
        <end position="392"/>
    </location>
</feature>
<feature type="region of interest" description="Disordered" evidence="3">
    <location>
        <begin position="19"/>
        <end position="78"/>
    </location>
</feature>
<feature type="region of interest" description="Basic motif 1" evidence="2">
    <location>
        <begin position="60"/>
        <end position="85"/>
    </location>
</feature>
<feature type="region of interest" description="Leucine-zipper 1" evidence="2">
    <location>
        <begin position="89"/>
        <end position="96"/>
    </location>
</feature>
<feature type="region of interest" description="Disordered" evidence="3">
    <location>
        <begin position="181"/>
        <end position="256"/>
    </location>
</feature>
<feature type="region of interest" description="Disordered" evidence="3">
    <location>
        <begin position="273"/>
        <end position="345"/>
    </location>
</feature>
<feature type="region of interest" description="Basic motif 2" evidence="2">
    <location>
        <begin position="335"/>
        <end position="360"/>
    </location>
</feature>
<feature type="region of interest" description="Leucine-zipper 2" evidence="2">
    <location>
        <begin position="364"/>
        <end position="378"/>
    </location>
</feature>
<feature type="coiled-coil region" evidence="1">
    <location>
        <begin position="361"/>
        <end position="388"/>
    </location>
</feature>
<feature type="compositionally biased region" description="Low complexity" evidence="3">
    <location>
        <begin position="19"/>
        <end position="38"/>
    </location>
</feature>
<feature type="compositionally biased region" description="Basic and acidic residues" evidence="3">
    <location>
        <begin position="41"/>
        <end position="78"/>
    </location>
</feature>
<feature type="compositionally biased region" description="Low complexity" evidence="3">
    <location>
        <begin position="181"/>
        <end position="211"/>
    </location>
</feature>
<feature type="compositionally biased region" description="Polar residues" evidence="3">
    <location>
        <begin position="222"/>
        <end position="256"/>
    </location>
</feature>
<feature type="compositionally biased region" description="Polar residues" evidence="3">
    <location>
        <begin position="273"/>
        <end position="283"/>
    </location>
</feature>
<feature type="compositionally biased region" description="Low complexity" evidence="3">
    <location>
        <begin position="305"/>
        <end position="317"/>
    </location>
</feature>
<sequence>MDVDSASLSPSSRLSVVCSASAEFSSSSSDSSNFSEGSPPESRRNSVNESVIKDEHYWERRRRNNDASRRSREKRRQNDLAMEEKIMLLSAENERLKSQLGTTPIPQPSVTEPPTSLIIPQVAKNLFPAGPIASLQASSMLTVPLLQAASHIPSMLQLCQLQPTTIQSPVYASTQQPASTSASSLFSSSSSSAFHPFRPSESAQQSFPSSSVIVKIERRSPDSSTDVNMPQPQLQPGSSVIQQIGQPAPSGTPQPVIQAVQQGPSLLSALLSQRRPSPTVPQSRTEHISGLNSPPRHTGNKSDCESVSSSASFSPSHSSEDHSNYSNKSPQYVDRRRRNNEAAKRCRANRRAVFEYRSRRVQLLEGENEDLRTQIETLKAEIAHFKSVLAQRASVVTALHP</sequence>
<name>NFIL3_CAEEL</name>
<accession>Q21361</accession>
<comment type="function">
    <text evidence="5 6 7">Acts as a transcription factor that recognizes and binds to the sequence 5'-[GA]TTA[CT]GTAA[CT]-3', a sequence present in many promoters (PubMed:16310763, PubMed:21502138). Involved in the development of the excretory duct cell, by positively modulating embryonic transcription of putative transcription factor lin-48, acting in concert with cell death specification protein ces-2 (PubMed:16310763). Negatively modulates expression of key autophagy-related genes, bec-1/ATG6 and lgg-1/ATG8, and may link together autophagy and apoptosis during development (PubMed:21502138). Positively modulates expression of neuropeptide pigment dispersing factor homologs pdf-1 and pdf-2 (PubMed:19686386).</text>
</comment>
<comment type="subunit">
    <text evidence="5">Interacts with cell death specification protein ces-2.</text>
</comment>
<comment type="interaction">
    <interactant intactId="EBI-317743">
        <id>Q21361</id>
    </interactant>
    <interactant intactId="EBI-6735245">
        <id>O16213</id>
        <label>atf-8</label>
    </interactant>
    <organismsDiffer>false</organismsDiffer>
    <experiments>2</experiments>
</comment>
<comment type="interaction">
    <interactant intactId="EBI-317743">
        <id>Q21361</id>
    </interactant>
    <interactant intactId="EBI-2914231">
        <id>Q8IG69</id>
        <label>cebp-2</label>
    </interactant>
    <organismsDiffer>false</organismsDiffer>
    <experiments>2</experiments>
</comment>
<comment type="interaction">
    <interactant intactId="EBI-317743">
        <id>Q21361</id>
    </interactant>
    <interactant intactId="EBI-328155">
        <id>Q94126</id>
        <label>ces-2</label>
    </interactant>
    <organismsDiffer>false</organismsDiffer>
    <experiments>4</experiments>
</comment>
<comment type="interaction">
    <interactant intactId="EBI-317743">
        <id>Q21361</id>
    </interactant>
    <interactant intactId="EBI-316398">
        <id>P92004</id>
        <label>ifbp-1</label>
    </interactant>
    <organismsDiffer>false</organismsDiffer>
    <experiments>3</experiments>
</comment>
<comment type="interaction">
    <interactant intactId="EBI-317743">
        <id>Q21361</id>
    </interactant>
    <interactant intactId="EBI-6731556">
        <id>Q21148</id>
        <label>zip-2</label>
    </interactant>
    <organismsDiffer>false</organismsDiffer>
    <experiments>2</experiments>
</comment>
<comment type="subcellular location">
    <subcellularLocation>
        <location evidence="8">Nucleus</location>
    </subcellularLocation>
</comment>
<comment type="developmental stage">
    <text evidence="5">Expression begins in the embryo and persists into larval and adult stages (PubMed:16310763). Expressed in the excretory duct cell, as well as other cells, at larval L3 stage (PubMed:16310763).</text>
</comment>
<comment type="PTM">
    <text evidence="4">Phosphorylated by mitogen-activated protein kinases pmk-2 and pmk-3 (PubMed:11703092). May be responsive to osmotic stress (PubMed:11703092).</text>
</comment>
<comment type="similarity">
    <text evidence="8">Belongs to the bZIP family.</text>
</comment>
<keyword id="KW-0175">Coiled coil</keyword>
<keyword id="KW-0238">DNA-binding</keyword>
<keyword id="KW-0539">Nucleus</keyword>
<keyword id="KW-0597">Phosphoprotein</keyword>
<keyword id="KW-1185">Reference proteome</keyword>
<keyword id="KW-0804">Transcription</keyword>
<keyword id="KW-0805">Transcription regulation</keyword>
<evidence type="ECO:0000255" key="1"/>
<evidence type="ECO:0000255" key="2">
    <source>
        <dbReference type="PROSITE-ProRule" id="PRU00978"/>
    </source>
</evidence>
<evidence type="ECO:0000256" key="3">
    <source>
        <dbReference type="SAM" id="MobiDB-lite"/>
    </source>
</evidence>
<evidence type="ECO:0000269" key="4">
    <source>
    </source>
</evidence>
<evidence type="ECO:0000269" key="5">
    <source>
    </source>
</evidence>
<evidence type="ECO:0000269" key="6">
    <source>
    </source>
</evidence>
<evidence type="ECO:0000269" key="7">
    <source>
    </source>
</evidence>
<evidence type="ECO:0000305" key="8"/>
<evidence type="ECO:0000312" key="9">
    <source>
        <dbReference type="Proteomes" id="UP000001940"/>
    </source>
</evidence>
<evidence type="ECO:0000312" key="10">
    <source>
        <dbReference type="WormBase" id="K08F8.2"/>
    </source>
</evidence>